<name>SYGB_GLOC7</name>
<organism>
    <name type="scientific">Gloeothece citriformis (strain PCC 7424)</name>
    <name type="common">Cyanothece sp. (strain PCC 7424)</name>
    <dbReference type="NCBI Taxonomy" id="65393"/>
    <lineage>
        <taxon>Bacteria</taxon>
        <taxon>Bacillati</taxon>
        <taxon>Cyanobacteriota</taxon>
        <taxon>Cyanophyceae</taxon>
        <taxon>Oscillatoriophycideae</taxon>
        <taxon>Chroococcales</taxon>
        <taxon>Aphanothecaceae</taxon>
        <taxon>Gloeothece</taxon>
        <taxon>Gloeothece citriformis</taxon>
    </lineage>
</organism>
<dbReference type="EC" id="6.1.1.14" evidence="1"/>
<dbReference type="EMBL" id="CP001291">
    <property type="protein sequence ID" value="ACK73173.1"/>
    <property type="molecule type" value="Genomic_DNA"/>
</dbReference>
<dbReference type="RefSeq" id="WP_015956755.1">
    <property type="nucleotide sequence ID" value="NC_011729.1"/>
</dbReference>
<dbReference type="SMR" id="B7KD52"/>
<dbReference type="STRING" id="65393.PCC7424_4816"/>
<dbReference type="KEGG" id="cyc:PCC7424_4816"/>
<dbReference type="eggNOG" id="COG0751">
    <property type="taxonomic scope" value="Bacteria"/>
</dbReference>
<dbReference type="HOGENOM" id="CLU_007220_2_2_3"/>
<dbReference type="OrthoDB" id="9775440at2"/>
<dbReference type="Proteomes" id="UP000002384">
    <property type="component" value="Chromosome"/>
</dbReference>
<dbReference type="GO" id="GO:0005829">
    <property type="term" value="C:cytosol"/>
    <property type="evidence" value="ECO:0007669"/>
    <property type="project" value="TreeGrafter"/>
</dbReference>
<dbReference type="GO" id="GO:0004814">
    <property type="term" value="F:arginine-tRNA ligase activity"/>
    <property type="evidence" value="ECO:0007669"/>
    <property type="project" value="InterPro"/>
</dbReference>
<dbReference type="GO" id="GO:0005524">
    <property type="term" value="F:ATP binding"/>
    <property type="evidence" value="ECO:0007669"/>
    <property type="project" value="UniProtKB-UniRule"/>
</dbReference>
<dbReference type="GO" id="GO:0004820">
    <property type="term" value="F:glycine-tRNA ligase activity"/>
    <property type="evidence" value="ECO:0007669"/>
    <property type="project" value="UniProtKB-UniRule"/>
</dbReference>
<dbReference type="GO" id="GO:0006420">
    <property type="term" value="P:arginyl-tRNA aminoacylation"/>
    <property type="evidence" value="ECO:0007669"/>
    <property type="project" value="InterPro"/>
</dbReference>
<dbReference type="GO" id="GO:0006426">
    <property type="term" value="P:glycyl-tRNA aminoacylation"/>
    <property type="evidence" value="ECO:0007669"/>
    <property type="project" value="UniProtKB-UniRule"/>
</dbReference>
<dbReference type="HAMAP" id="MF_00255">
    <property type="entry name" value="Gly_tRNA_synth_beta"/>
    <property type="match status" value="1"/>
</dbReference>
<dbReference type="InterPro" id="IPR008909">
    <property type="entry name" value="DALR_anticod-bd"/>
</dbReference>
<dbReference type="InterPro" id="IPR015944">
    <property type="entry name" value="Gly-tRNA-synth_bsu"/>
</dbReference>
<dbReference type="InterPro" id="IPR006194">
    <property type="entry name" value="Gly-tRNA-synth_heterodimer"/>
</dbReference>
<dbReference type="NCBIfam" id="TIGR00211">
    <property type="entry name" value="glyS"/>
    <property type="match status" value="1"/>
</dbReference>
<dbReference type="PANTHER" id="PTHR30075:SF2">
    <property type="entry name" value="GLYCINE--TRNA LIGASE, CHLOROPLASTIC_MITOCHONDRIAL 2"/>
    <property type="match status" value="1"/>
</dbReference>
<dbReference type="PANTHER" id="PTHR30075">
    <property type="entry name" value="GLYCYL-TRNA SYNTHETASE"/>
    <property type="match status" value="1"/>
</dbReference>
<dbReference type="Pfam" id="PF05746">
    <property type="entry name" value="DALR_1"/>
    <property type="match status" value="1"/>
</dbReference>
<dbReference type="Pfam" id="PF02092">
    <property type="entry name" value="tRNA_synt_2f"/>
    <property type="match status" value="1"/>
</dbReference>
<dbReference type="PRINTS" id="PR01045">
    <property type="entry name" value="TRNASYNTHGB"/>
</dbReference>
<dbReference type="SUPFAM" id="SSF109604">
    <property type="entry name" value="HD-domain/PDEase-like"/>
    <property type="match status" value="1"/>
</dbReference>
<dbReference type="PROSITE" id="PS50861">
    <property type="entry name" value="AA_TRNA_LIGASE_II_GLYAB"/>
    <property type="match status" value="1"/>
</dbReference>
<feature type="chain" id="PRO_1000197173" description="Glycine--tRNA ligase beta subunit">
    <location>
        <begin position="1"/>
        <end position="717"/>
    </location>
</feature>
<evidence type="ECO:0000255" key="1">
    <source>
        <dbReference type="HAMAP-Rule" id="MF_00255"/>
    </source>
</evidence>
<gene>
    <name evidence="1" type="primary">glyS</name>
    <name type="ordered locus">PCC7424_4816</name>
</gene>
<keyword id="KW-0030">Aminoacyl-tRNA synthetase</keyword>
<keyword id="KW-0067">ATP-binding</keyword>
<keyword id="KW-0963">Cytoplasm</keyword>
<keyword id="KW-0436">Ligase</keyword>
<keyword id="KW-0547">Nucleotide-binding</keyword>
<keyword id="KW-0648">Protein biosynthesis</keyword>
<keyword id="KW-1185">Reference proteome</keyword>
<comment type="catalytic activity">
    <reaction evidence="1">
        <text>tRNA(Gly) + glycine + ATP = glycyl-tRNA(Gly) + AMP + diphosphate</text>
        <dbReference type="Rhea" id="RHEA:16013"/>
        <dbReference type="Rhea" id="RHEA-COMP:9664"/>
        <dbReference type="Rhea" id="RHEA-COMP:9683"/>
        <dbReference type="ChEBI" id="CHEBI:30616"/>
        <dbReference type="ChEBI" id="CHEBI:33019"/>
        <dbReference type="ChEBI" id="CHEBI:57305"/>
        <dbReference type="ChEBI" id="CHEBI:78442"/>
        <dbReference type="ChEBI" id="CHEBI:78522"/>
        <dbReference type="ChEBI" id="CHEBI:456215"/>
        <dbReference type="EC" id="6.1.1.14"/>
    </reaction>
</comment>
<comment type="subunit">
    <text evidence="1">Tetramer of two alpha and two beta subunits.</text>
</comment>
<comment type="subcellular location">
    <subcellularLocation>
        <location evidence="1">Cytoplasm</location>
    </subcellularLocation>
</comment>
<comment type="similarity">
    <text evidence="1">Belongs to the class-II aminoacyl-tRNA synthetase family.</text>
</comment>
<accession>B7KD52</accession>
<sequence>MPSFLLEVGTEELPANFVDEAIAQWQSRIPSSLEEQQLTPEGIEFYGTPRRLAVLIKGLPAKQSDRIEEVKGPAANVAFKSGKPTKALEGFVRKQGVTPDEVEIRDTDKGEFVFVQKNITGRNTTEILQELVPQWITQLEGRRFMRWGDGDLRFPRPIRWLVTLWDQDILPLELVNGATQVKSDRLTYGHRILAPESVSIPEASAYQKSLQQAYVEVSPLQRRQTIEQQIEKVAKQLKGVAVIPPDLLDEVVNLVEYPSAVAGNFEPDFLNLPTEVITTVMVTHQRYFPVKATGKTNKNNTLLPYFITISNGDPNKGEIIAAGNERVIRARLADAQFFYKADCDEPLESYLPQLETVTFQEQLGTIRDKVDRIMEISQLIADQLDLDSGERSEIESTAMLCKADLVTQMVYEFPELQGVMGQKYALASGESPNVALGIFEHYLPRGADDIMPESLTGQVVGLADRIDTIVSIFGLGMIPTGSGDPFALRRAATGIIKVTWYAELPIDILDLLEQSSQDFVTAHPDKTSPIESLKSFFIQRLSTLLQDDLHIDYDLVNAVLGENDPEYTERALRDLLDVRDRAQFLQSIRNNQKIDEIYETVNRSARLAVKGELDTQELDPEKVIRPALFEKSSEEHFYKVLIDLVPTTLTAQRERNYQLLVDALGKIAPTVSNFFDGEDSVLVMDENLEVRENRLNLLGLLRNHARVLADFGAIVKS</sequence>
<protein>
    <recommendedName>
        <fullName evidence="1">Glycine--tRNA ligase beta subunit</fullName>
        <ecNumber evidence="1">6.1.1.14</ecNumber>
    </recommendedName>
    <alternativeName>
        <fullName evidence="1">Glycyl-tRNA synthetase beta subunit</fullName>
        <shortName evidence="1">GlyRS</shortName>
    </alternativeName>
</protein>
<reference key="1">
    <citation type="journal article" date="2011" name="MBio">
        <title>Novel metabolic attributes of the genus Cyanothece, comprising a group of unicellular nitrogen-fixing Cyanobacteria.</title>
        <authorList>
            <person name="Bandyopadhyay A."/>
            <person name="Elvitigala T."/>
            <person name="Welsh E."/>
            <person name="Stockel J."/>
            <person name="Liberton M."/>
            <person name="Min H."/>
            <person name="Sherman L.A."/>
            <person name="Pakrasi H.B."/>
        </authorList>
    </citation>
    <scope>NUCLEOTIDE SEQUENCE [LARGE SCALE GENOMIC DNA]</scope>
    <source>
        <strain>PCC 7424</strain>
    </source>
</reference>
<proteinExistence type="inferred from homology"/>